<comment type="function">
    <text evidence="1">Involved in both the histidine and tryptophan biosynthetic pathways.</text>
</comment>
<comment type="catalytic activity">
    <reaction evidence="1">
        <text>1-(5-phospho-beta-D-ribosyl)-5-[(5-phospho-beta-D-ribosylamino)methylideneamino]imidazole-4-carboxamide = 5-[(5-phospho-1-deoxy-D-ribulos-1-ylimino)methylamino]-1-(5-phospho-beta-D-ribosyl)imidazole-4-carboxamide</text>
        <dbReference type="Rhea" id="RHEA:15469"/>
        <dbReference type="ChEBI" id="CHEBI:58435"/>
        <dbReference type="ChEBI" id="CHEBI:58525"/>
        <dbReference type="EC" id="5.3.1.16"/>
    </reaction>
</comment>
<comment type="catalytic activity">
    <reaction evidence="1">
        <text>N-(5-phospho-beta-D-ribosyl)anthranilate = 1-(2-carboxyphenylamino)-1-deoxy-D-ribulose 5-phosphate</text>
        <dbReference type="Rhea" id="RHEA:21540"/>
        <dbReference type="ChEBI" id="CHEBI:18277"/>
        <dbReference type="ChEBI" id="CHEBI:58613"/>
        <dbReference type="EC" id="5.3.1.24"/>
    </reaction>
</comment>
<comment type="pathway">
    <text evidence="1">Amino-acid biosynthesis; L-histidine biosynthesis; L-histidine from 5-phospho-alpha-D-ribose 1-diphosphate: step 4/9.</text>
</comment>
<comment type="pathway">
    <text evidence="1">Amino-acid biosynthesis; L-tryptophan biosynthesis; L-tryptophan from chorismate: step 3/5.</text>
</comment>
<comment type="subcellular location">
    <subcellularLocation>
        <location evidence="1">Cytoplasm</location>
    </subcellularLocation>
</comment>
<comment type="similarity">
    <text evidence="1">Belongs to the HisA/HisF family.</text>
</comment>
<proteinExistence type="inferred from homology"/>
<accession>B1MBX5</accession>
<keyword id="KW-0028">Amino-acid biosynthesis</keyword>
<keyword id="KW-0057">Aromatic amino acid biosynthesis</keyword>
<keyword id="KW-0963">Cytoplasm</keyword>
<keyword id="KW-0368">Histidine biosynthesis</keyword>
<keyword id="KW-0413">Isomerase</keyword>
<keyword id="KW-1185">Reference proteome</keyword>
<keyword id="KW-0822">Tryptophan biosynthesis</keyword>
<gene>
    <name evidence="1" type="primary">priA</name>
    <name evidence="1" type="synonym">hisA</name>
    <name type="ordered locus">MAB_2666c</name>
</gene>
<organism>
    <name type="scientific">Mycobacteroides abscessus (strain ATCC 19977 / DSM 44196 / CCUG 20993 / CIP 104536 / JCM 13569 / NCTC 13031 / TMC 1543 / L948)</name>
    <name type="common">Mycobacterium abscessus</name>
    <dbReference type="NCBI Taxonomy" id="561007"/>
    <lineage>
        <taxon>Bacteria</taxon>
        <taxon>Bacillati</taxon>
        <taxon>Actinomycetota</taxon>
        <taxon>Actinomycetes</taxon>
        <taxon>Mycobacteriales</taxon>
        <taxon>Mycobacteriaceae</taxon>
        <taxon>Mycobacteroides</taxon>
        <taxon>Mycobacteroides abscessus</taxon>
    </lineage>
</organism>
<name>HIS4_MYCA9</name>
<reference key="1">
    <citation type="journal article" date="2009" name="PLoS ONE">
        <title>Non mycobacterial virulence genes in the genome of the emerging pathogen Mycobacterium abscessus.</title>
        <authorList>
            <person name="Ripoll F."/>
            <person name="Pasek S."/>
            <person name="Schenowitz C."/>
            <person name="Dossat C."/>
            <person name="Barbe V."/>
            <person name="Rottman M."/>
            <person name="Macheras E."/>
            <person name="Heym B."/>
            <person name="Herrmann J.L."/>
            <person name="Daffe M."/>
            <person name="Brosch R."/>
            <person name="Risler J.L."/>
            <person name="Gaillard J.L."/>
        </authorList>
    </citation>
    <scope>NUCLEOTIDE SEQUENCE [LARGE SCALE GENOMIC DNA]</scope>
    <source>
        <strain>ATCC 19977 / DSM 44196 / CCUG 20993 / CIP 104536 / JCM 13569 / NCTC 13031 / TMC 1543 / L948</strain>
    </source>
</reference>
<evidence type="ECO:0000255" key="1">
    <source>
        <dbReference type="HAMAP-Rule" id="MF_01014"/>
    </source>
</evidence>
<dbReference type="EC" id="5.3.1.16" evidence="1"/>
<dbReference type="EC" id="5.3.1.24" evidence="1"/>
<dbReference type="EMBL" id="CU458896">
    <property type="protein sequence ID" value="CAM62746.1"/>
    <property type="molecule type" value="Genomic_DNA"/>
</dbReference>
<dbReference type="RefSeq" id="WP_005114402.1">
    <property type="nucleotide sequence ID" value="NZ_MLCG01000003.1"/>
</dbReference>
<dbReference type="SMR" id="B1MBX5"/>
<dbReference type="GeneID" id="93379597"/>
<dbReference type="KEGG" id="mab:MAB_2666c"/>
<dbReference type="UniPathway" id="UPA00031">
    <property type="reaction ID" value="UER00009"/>
</dbReference>
<dbReference type="UniPathway" id="UPA00035">
    <property type="reaction ID" value="UER00042"/>
</dbReference>
<dbReference type="Proteomes" id="UP000007137">
    <property type="component" value="Chromosome"/>
</dbReference>
<dbReference type="GO" id="GO:0005737">
    <property type="term" value="C:cytoplasm"/>
    <property type="evidence" value="ECO:0007669"/>
    <property type="project" value="UniProtKB-SubCell"/>
</dbReference>
<dbReference type="GO" id="GO:0003949">
    <property type="term" value="F:1-(5-phosphoribosyl)-5-[(5-phosphoribosylamino)methylideneamino]imidazole-4-carboxamide isomerase activity"/>
    <property type="evidence" value="ECO:0007669"/>
    <property type="project" value="UniProtKB-UniRule"/>
</dbReference>
<dbReference type="GO" id="GO:0004640">
    <property type="term" value="F:phosphoribosylanthranilate isomerase activity"/>
    <property type="evidence" value="ECO:0007669"/>
    <property type="project" value="UniProtKB-UniRule"/>
</dbReference>
<dbReference type="GO" id="GO:0000105">
    <property type="term" value="P:L-histidine biosynthetic process"/>
    <property type="evidence" value="ECO:0007669"/>
    <property type="project" value="UniProtKB-UniRule"/>
</dbReference>
<dbReference type="GO" id="GO:0000162">
    <property type="term" value="P:L-tryptophan biosynthetic process"/>
    <property type="evidence" value="ECO:0007669"/>
    <property type="project" value="UniProtKB-UniRule"/>
</dbReference>
<dbReference type="CDD" id="cd04732">
    <property type="entry name" value="HisA"/>
    <property type="match status" value="1"/>
</dbReference>
<dbReference type="FunFam" id="3.20.20.70:FF:000009">
    <property type="entry name" value="1-(5-phosphoribosyl)-5-[(5-phosphoribosylamino)methylideneamino] imidazole-4-carboxamide isomerase"/>
    <property type="match status" value="1"/>
</dbReference>
<dbReference type="Gene3D" id="3.20.20.70">
    <property type="entry name" value="Aldolase class I"/>
    <property type="match status" value="1"/>
</dbReference>
<dbReference type="HAMAP" id="MF_01014">
    <property type="entry name" value="HisA"/>
    <property type="match status" value="1"/>
</dbReference>
<dbReference type="InterPro" id="IPR013785">
    <property type="entry name" value="Aldolase_TIM"/>
</dbReference>
<dbReference type="InterPro" id="IPR006062">
    <property type="entry name" value="His_biosynth"/>
</dbReference>
<dbReference type="InterPro" id="IPR010188">
    <property type="entry name" value="HisA/PriA_Actinobacteria"/>
</dbReference>
<dbReference type="InterPro" id="IPR044524">
    <property type="entry name" value="Isoase_HisA-like"/>
</dbReference>
<dbReference type="InterPro" id="IPR023016">
    <property type="entry name" value="Isoase_HisA-like_bact"/>
</dbReference>
<dbReference type="InterPro" id="IPR011060">
    <property type="entry name" value="RibuloseP-bd_barrel"/>
</dbReference>
<dbReference type="NCBIfam" id="TIGR01919">
    <property type="entry name" value="hisA-trpF"/>
    <property type="match status" value="1"/>
</dbReference>
<dbReference type="PANTHER" id="PTHR43090">
    <property type="entry name" value="1-(5-PHOSPHORIBOSYL)-5-[(5-PHOSPHORIBOSYLAMINO)METHYLIDENEAMINO] IMIDAZOLE-4-CARBOXAMIDE ISOMERASE"/>
    <property type="match status" value="1"/>
</dbReference>
<dbReference type="PANTHER" id="PTHR43090:SF2">
    <property type="entry name" value="1-(5-PHOSPHORIBOSYL)-5-[(5-PHOSPHORIBOSYLAMINO)METHYLIDENEAMINO] IMIDAZOLE-4-CARBOXAMIDE ISOMERASE"/>
    <property type="match status" value="1"/>
</dbReference>
<dbReference type="Pfam" id="PF00977">
    <property type="entry name" value="His_biosynth"/>
    <property type="match status" value="1"/>
</dbReference>
<dbReference type="SUPFAM" id="SSF51366">
    <property type="entry name" value="Ribulose-phoshate binding barrel"/>
    <property type="match status" value="1"/>
</dbReference>
<feature type="chain" id="PRO_1000135131" description="Phosphoribosyl isomerase A">
    <location>
        <begin position="1"/>
        <end position="243"/>
    </location>
</feature>
<feature type="active site" description="Proton acceptor" evidence="1">
    <location>
        <position position="10"/>
    </location>
</feature>
<feature type="active site" description="Proton donor" evidence="1">
    <location>
        <position position="129"/>
    </location>
</feature>
<sequence length="243" mass="25075">MSLVLLPAVDVADGQAVRLVQGKAGSETTYGSPRDAALAWQNDGAEWVHLVDLDAAFGRGSNRELLAQVVGELDVKVELSGGIRDDEALTAALATGCARVNLGTAALEDPEWCASAIARHGERVAVGLDVEIVEGAHRLRGRGWVSDGGDLWEVLERLRAQGCSRYVVTDVTKDGTLTGPNLELLAQVAGVANAPVIASGGVSSLDDLRAIAELTGAGVEGAIVGKALYAGRFTLPDAIAAVS</sequence>
<protein>
    <recommendedName>
        <fullName evidence="1">Phosphoribosyl isomerase A</fullName>
    </recommendedName>
    <alternativeName>
        <fullName evidence="1">1-(5-phosphoribosyl)-5-[(5-phosphoribosylamino)methylideneamino] imidazole-4-carboxamide isomerase</fullName>
        <ecNumber evidence="1">5.3.1.16</ecNumber>
    </alternativeName>
    <alternativeName>
        <fullName evidence="1">N-(5'-phosphoribosyl)anthranilate isomerase</fullName>
        <shortName evidence="1">PRAI</shortName>
        <ecNumber evidence="1">5.3.1.24</ecNumber>
    </alternativeName>
    <alternativeName>
        <fullName evidence="1">Phosphoribosylformimino-5-aminoimidazole carboxamide ribotide isomerase</fullName>
    </alternativeName>
</protein>